<proteinExistence type="inferred from homology"/>
<organism>
    <name type="scientific">Ajellomyces capsulatus (strain NAm1 / WU24)</name>
    <name type="common">Darling's disease fungus</name>
    <name type="synonym">Histoplasma capsulatum</name>
    <dbReference type="NCBI Taxonomy" id="2059318"/>
    <lineage>
        <taxon>Eukaryota</taxon>
        <taxon>Fungi</taxon>
        <taxon>Dikarya</taxon>
        <taxon>Ascomycota</taxon>
        <taxon>Pezizomycotina</taxon>
        <taxon>Eurotiomycetes</taxon>
        <taxon>Eurotiomycetidae</taxon>
        <taxon>Onygenales</taxon>
        <taxon>Ajellomycetaceae</taxon>
        <taxon>Histoplasma</taxon>
    </lineage>
</organism>
<protein>
    <recommendedName>
        <fullName>Protein SIP5</fullName>
    </recommendedName>
</protein>
<dbReference type="EMBL" id="CH476664">
    <property type="protein sequence ID" value="EDN04502.1"/>
    <property type="status" value="ALT_SEQ"/>
    <property type="molecule type" value="Genomic_DNA"/>
</dbReference>
<dbReference type="SMR" id="A6REV3"/>
<dbReference type="STRING" id="339724.A6REV3"/>
<dbReference type="KEGG" id="aje:HCAG_08168"/>
<dbReference type="HOGENOM" id="CLU_009068_1_0_1"/>
<dbReference type="OrthoDB" id="11550at299071"/>
<dbReference type="Proteomes" id="UP000009297">
    <property type="component" value="Unassembled WGS sequence"/>
</dbReference>
<dbReference type="GO" id="GO:0005737">
    <property type="term" value="C:cytoplasm"/>
    <property type="evidence" value="ECO:0007669"/>
    <property type="project" value="UniProtKB-SubCell"/>
</dbReference>
<dbReference type="CDD" id="cd24139">
    <property type="entry name" value="SIP5-like"/>
    <property type="match status" value="1"/>
</dbReference>
<dbReference type="InterPro" id="IPR039301">
    <property type="entry name" value="Sip5/DA2"/>
</dbReference>
<dbReference type="InterPro" id="IPR013087">
    <property type="entry name" value="Znf_C2H2_type"/>
</dbReference>
<dbReference type="PANTHER" id="PTHR31315">
    <property type="entry name" value="PROTEIN SIP5"/>
    <property type="match status" value="1"/>
</dbReference>
<dbReference type="PANTHER" id="PTHR31315:SF1">
    <property type="entry name" value="PROTEIN SIP5"/>
    <property type="match status" value="1"/>
</dbReference>
<reference key="1">
    <citation type="journal article" date="2009" name="Genome Res.">
        <title>Comparative genomic analyses of the human fungal pathogens Coccidioides and their relatives.</title>
        <authorList>
            <person name="Sharpton T.J."/>
            <person name="Stajich J.E."/>
            <person name="Rounsley S.D."/>
            <person name="Gardner M.J."/>
            <person name="Wortman J.R."/>
            <person name="Jordar V.S."/>
            <person name="Maiti R."/>
            <person name="Kodira C.D."/>
            <person name="Neafsey D.E."/>
            <person name="Zeng Q."/>
            <person name="Hung C.-Y."/>
            <person name="McMahan C."/>
            <person name="Muszewska A."/>
            <person name="Grynberg M."/>
            <person name="Mandel M.A."/>
            <person name="Kellner E.M."/>
            <person name="Barker B.M."/>
            <person name="Galgiani J.N."/>
            <person name="Orbach M.J."/>
            <person name="Kirkland T.N."/>
            <person name="Cole G.T."/>
            <person name="Henn M.R."/>
            <person name="Birren B.W."/>
            <person name="Taylor J.W."/>
        </authorList>
    </citation>
    <scope>NUCLEOTIDE SEQUENCE [LARGE SCALE GENOMIC DNA]</scope>
    <source>
        <strain>NAm1 / WU24</strain>
    </source>
</reference>
<accession>A6REV3</accession>
<sequence length="824" mass="89520">MGNTATKEARPPAGTSGRNGHGRGPSGGAVALGGLGRFHNQPESSQPGVSSRHFRGSRPDLSFLGIGPAVDRDSFVERKETKQERDARRLARERAARIKERERSMKEEHVDGGYLVTQGVYTGVEDFNKAVVRQLMIERRLAPFWKGLEEFSDSWTEHQLMAAARGLLIPAPDEIPPELEYKLTPPRLPEDQDLPDQNLNNLTVPITSRSQSYNSDLSSTTHPVSPSISLQPQLSPGVSGSPGAHLFRGRAKTLASLTASSKHSSPGEMSPRELQLPKDPFVNGQPIEAYLYKNPIECPICFLYYPPYLNRTRCCDQWICSECFVQIKRADPHLPEHEQRDPNSPSPDRPDGQLISEPAGCPFCVQPDFGVSYTPPPFRRGLSYIPSNSLDKTLLSPASSTSSLVSGNANSHSITTRRRATSLSANSPAVIMTDKIRPDWAHKLQTARAQAARRSAAATALHAAAYINAMNNPIETRGMGSSSRRMLRRTTGHGSDNSTNQAGSVALLAERRAIAADRENDSPAESTSNLAPARASSRRNRMDELEEMMMMEAIRLSLASEEERRKKEEKEAKKEAKRREREAKRAEKLARKNGLYSNNPSSVALDATGSNTAVRTGRELSPPVSVLEPSSDKGKAVDRPGSLSEPPHTDTQLPGLPKLSLKTSDDDLSSIFAPSSAAAAKRSHLRHISSSSSSNSSLVGSACGELIGSGSTPNFNSAIEPVLNFRSLDAVIDDENTNGSRHEHLEGATKLKKTQQPSNDNAISPRPNRDLGLGVEPGSVQQATVPPQGDSSINKDENDVRDKELQSHTAETMHGGNTNLETVG</sequence>
<gene>
    <name type="primary">SIP5</name>
    <name type="ORF">HCAG_08168</name>
</gene>
<feature type="chain" id="PRO_0000333424" description="Protein SIP5">
    <location>
        <begin position="1"/>
        <end position="824"/>
    </location>
</feature>
<feature type="region of interest" description="Disordered" evidence="2">
    <location>
        <begin position="1"/>
        <end position="66"/>
    </location>
</feature>
<feature type="region of interest" description="Disordered" evidence="2">
    <location>
        <begin position="183"/>
        <end position="202"/>
    </location>
</feature>
<feature type="region of interest" description="Disordered" evidence="2">
    <location>
        <begin position="210"/>
        <end position="242"/>
    </location>
</feature>
<feature type="region of interest" description="Disordered" evidence="2">
    <location>
        <begin position="256"/>
        <end position="278"/>
    </location>
</feature>
<feature type="region of interest" description="Disordered" evidence="2">
    <location>
        <begin position="397"/>
        <end position="421"/>
    </location>
</feature>
<feature type="region of interest" description="Disordered" evidence="2">
    <location>
        <begin position="473"/>
        <end position="503"/>
    </location>
</feature>
<feature type="region of interest" description="Disordered" evidence="2">
    <location>
        <begin position="517"/>
        <end position="539"/>
    </location>
</feature>
<feature type="region of interest" description="Disordered" evidence="2">
    <location>
        <begin position="561"/>
        <end position="662"/>
    </location>
</feature>
<feature type="region of interest" description="Disordered" evidence="2">
    <location>
        <begin position="735"/>
        <end position="824"/>
    </location>
</feature>
<feature type="compositionally biased region" description="Gly residues" evidence="2">
    <location>
        <begin position="17"/>
        <end position="36"/>
    </location>
</feature>
<feature type="compositionally biased region" description="Polar residues" evidence="2">
    <location>
        <begin position="210"/>
        <end position="222"/>
    </location>
</feature>
<feature type="compositionally biased region" description="Low complexity" evidence="2">
    <location>
        <begin position="223"/>
        <end position="236"/>
    </location>
</feature>
<feature type="compositionally biased region" description="Low complexity" evidence="2">
    <location>
        <begin position="397"/>
        <end position="406"/>
    </location>
</feature>
<feature type="compositionally biased region" description="Polar residues" evidence="2">
    <location>
        <begin position="493"/>
        <end position="503"/>
    </location>
</feature>
<feature type="compositionally biased region" description="Basic and acidic residues" evidence="2">
    <location>
        <begin position="561"/>
        <end position="590"/>
    </location>
</feature>
<feature type="compositionally biased region" description="Polar residues" evidence="2">
    <location>
        <begin position="595"/>
        <end position="614"/>
    </location>
</feature>
<feature type="compositionally biased region" description="Low complexity" evidence="2">
    <location>
        <begin position="619"/>
        <end position="629"/>
    </location>
</feature>
<feature type="compositionally biased region" description="Basic and acidic residues" evidence="2">
    <location>
        <begin position="740"/>
        <end position="749"/>
    </location>
</feature>
<feature type="compositionally biased region" description="Polar residues" evidence="2">
    <location>
        <begin position="779"/>
        <end position="792"/>
    </location>
</feature>
<feature type="compositionally biased region" description="Basic and acidic residues" evidence="2">
    <location>
        <begin position="793"/>
        <end position="806"/>
    </location>
</feature>
<feature type="compositionally biased region" description="Polar residues" evidence="2">
    <location>
        <begin position="807"/>
        <end position="824"/>
    </location>
</feature>
<name>SIP5_AJECN</name>
<comment type="function">
    <text evidence="1">May negatively regulate the SNF1 kinase.</text>
</comment>
<comment type="subcellular location">
    <subcellularLocation>
        <location evidence="1">Cytoplasm</location>
    </subcellularLocation>
</comment>
<comment type="similarity">
    <text evidence="3">Belongs to the SIP5 family.</text>
</comment>
<comment type="sequence caution" evidence="3">
    <conflict type="erroneous gene model prediction">
        <sequence resource="EMBL-CDS" id="EDN04502"/>
    </conflict>
</comment>
<evidence type="ECO:0000250" key="1"/>
<evidence type="ECO:0000256" key="2">
    <source>
        <dbReference type="SAM" id="MobiDB-lite"/>
    </source>
</evidence>
<evidence type="ECO:0000305" key="3"/>
<keyword id="KW-0963">Cytoplasm</keyword>
<keyword id="KW-1185">Reference proteome</keyword>